<protein>
    <recommendedName>
        <fullName evidence="2">Probable sulfurtransferase</fullName>
        <ecNumber evidence="2">2.8.1.-</ecNumber>
    </recommendedName>
</protein>
<name>Y485_METJA</name>
<comment type="cofactor">
    <cofactor evidence="1">
        <name>[4Fe-4S] cluster</name>
        <dbReference type="ChEBI" id="CHEBI:49883"/>
    </cofactor>
    <text evidence="1">Binds 1 [4Fe-4S] cluster per subunit. The cluster is chelated by three Cys residues.</text>
</comment>
<comment type="cofactor">
    <cofactor evidence="1">
        <name>Mg(2+)</name>
        <dbReference type="ChEBI" id="CHEBI:18420"/>
    </cofactor>
</comment>
<comment type="similarity">
    <text evidence="2">Belongs to the TtcA family.</text>
</comment>
<organism>
    <name type="scientific">Methanocaldococcus jannaschii (strain ATCC 43067 / DSM 2661 / JAL-1 / JCM 10045 / NBRC 100440)</name>
    <name type="common">Methanococcus jannaschii</name>
    <dbReference type="NCBI Taxonomy" id="243232"/>
    <lineage>
        <taxon>Archaea</taxon>
        <taxon>Methanobacteriati</taxon>
        <taxon>Methanobacteriota</taxon>
        <taxon>Methanomada group</taxon>
        <taxon>Methanococci</taxon>
        <taxon>Methanococcales</taxon>
        <taxon>Methanocaldococcaceae</taxon>
        <taxon>Methanocaldococcus</taxon>
    </lineage>
</organism>
<evidence type="ECO:0000250" key="1">
    <source>
        <dbReference type="UniProtKB" id="O58038"/>
    </source>
</evidence>
<evidence type="ECO:0000305" key="2"/>
<proteinExistence type="inferred from homology"/>
<feature type="chain" id="PRO_0000106892" description="Probable sulfurtransferase">
    <location>
        <begin position="1"/>
        <end position="337"/>
    </location>
</feature>
<feature type="binding site" evidence="1">
    <location>
        <position position="83"/>
    </location>
    <ligand>
        <name>ATP</name>
        <dbReference type="ChEBI" id="CHEBI:30616"/>
    </ligand>
</feature>
<feature type="binding site" evidence="1">
    <location>
        <position position="172"/>
    </location>
    <ligand>
        <name>[4Fe-4S] cluster</name>
        <dbReference type="ChEBI" id="CHEBI:49883"/>
    </ligand>
</feature>
<feature type="binding site" evidence="1">
    <location>
        <position position="175"/>
    </location>
    <ligand>
        <name>[4Fe-4S] cluster</name>
        <dbReference type="ChEBI" id="CHEBI:49883"/>
    </ligand>
</feature>
<feature type="binding site" evidence="1">
    <location>
        <position position="179"/>
    </location>
    <ligand>
        <name>ATP</name>
        <dbReference type="ChEBI" id="CHEBI:30616"/>
    </ligand>
</feature>
<feature type="binding site" evidence="1">
    <location>
        <position position="206"/>
    </location>
    <ligand>
        <name>ATP</name>
        <dbReference type="ChEBI" id="CHEBI:30616"/>
    </ligand>
</feature>
<feature type="binding site" evidence="1">
    <location>
        <position position="284"/>
    </location>
    <ligand>
        <name>[4Fe-4S] cluster</name>
        <dbReference type="ChEBI" id="CHEBI:49883"/>
    </ligand>
</feature>
<accession>Q57909</accession>
<dbReference type="EC" id="2.8.1.-" evidence="2"/>
<dbReference type="EMBL" id="L77117">
    <property type="protein sequence ID" value="AAB98476.1"/>
    <property type="molecule type" value="Genomic_DNA"/>
</dbReference>
<dbReference type="PIR" id="E64360">
    <property type="entry name" value="E64360"/>
</dbReference>
<dbReference type="RefSeq" id="WP_010869986.1">
    <property type="nucleotide sequence ID" value="NC_000909.1"/>
</dbReference>
<dbReference type="SMR" id="Q57909"/>
<dbReference type="STRING" id="243232.MJ_0485"/>
<dbReference type="PaxDb" id="243232-MJ_0485"/>
<dbReference type="EnsemblBacteria" id="AAB98476">
    <property type="protein sequence ID" value="AAB98476"/>
    <property type="gene ID" value="MJ_0485"/>
</dbReference>
<dbReference type="GeneID" id="1451347"/>
<dbReference type="KEGG" id="mja:MJ_0485"/>
<dbReference type="eggNOG" id="arCOG00042">
    <property type="taxonomic scope" value="Archaea"/>
</dbReference>
<dbReference type="HOGENOM" id="CLU_830567_0_0_2"/>
<dbReference type="InParanoid" id="Q57909"/>
<dbReference type="OrthoDB" id="33422at2157"/>
<dbReference type="PhylomeDB" id="Q57909"/>
<dbReference type="Proteomes" id="UP000000805">
    <property type="component" value="Chromosome"/>
</dbReference>
<dbReference type="GO" id="GO:0002144">
    <property type="term" value="C:cytosolic tRNA wobble base thiouridylase complex"/>
    <property type="evidence" value="ECO:0000318"/>
    <property type="project" value="GO_Central"/>
</dbReference>
<dbReference type="GO" id="GO:0051539">
    <property type="term" value="F:4 iron, 4 sulfur cluster binding"/>
    <property type="evidence" value="ECO:0007669"/>
    <property type="project" value="UniProtKB-KW"/>
</dbReference>
<dbReference type="GO" id="GO:0005524">
    <property type="term" value="F:ATP binding"/>
    <property type="evidence" value="ECO:0007669"/>
    <property type="project" value="UniProtKB-KW"/>
</dbReference>
<dbReference type="GO" id="GO:0046872">
    <property type="term" value="F:metal ion binding"/>
    <property type="evidence" value="ECO:0007669"/>
    <property type="project" value="UniProtKB-KW"/>
</dbReference>
<dbReference type="GO" id="GO:0016740">
    <property type="term" value="F:transferase activity"/>
    <property type="evidence" value="ECO:0007669"/>
    <property type="project" value="UniProtKB-KW"/>
</dbReference>
<dbReference type="GO" id="GO:0000049">
    <property type="term" value="F:tRNA binding"/>
    <property type="evidence" value="ECO:0000318"/>
    <property type="project" value="GO_Central"/>
</dbReference>
<dbReference type="GO" id="GO:0002143">
    <property type="term" value="P:tRNA wobble position uridine thiolation"/>
    <property type="evidence" value="ECO:0000318"/>
    <property type="project" value="GO_Central"/>
</dbReference>
<dbReference type="CDD" id="cd24138">
    <property type="entry name" value="TtcA-like"/>
    <property type="match status" value="1"/>
</dbReference>
<dbReference type="Gene3D" id="3.40.50.620">
    <property type="entry name" value="HUPs"/>
    <property type="match status" value="1"/>
</dbReference>
<dbReference type="InterPro" id="IPR014729">
    <property type="entry name" value="Rossmann-like_a/b/a_fold"/>
</dbReference>
<dbReference type="InterPro" id="IPR011063">
    <property type="entry name" value="TilS/TtcA_N"/>
</dbReference>
<dbReference type="InterPro" id="IPR035107">
    <property type="entry name" value="tRNA_thiolation_TtcA_Ctu1"/>
</dbReference>
<dbReference type="PANTHER" id="PTHR11807">
    <property type="entry name" value="ATPASES OF THE PP SUPERFAMILY-RELATED"/>
    <property type="match status" value="1"/>
</dbReference>
<dbReference type="PANTHER" id="PTHR11807:SF12">
    <property type="entry name" value="CYTOPLASMIC TRNA 2-THIOLATION PROTEIN 1"/>
    <property type="match status" value="1"/>
</dbReference>
<dbReference type="Pfam" id="PF01171">
    <property type="entry name" value="ATP_bind_3"/>
    <property type="match status" value="1"/>
</dbReference>
<dbReference type="PIRSF" id="PIRSF004976">
    <property type="entry name" value="ATPase_YdaO"/>
    <property type="match status" value="1"/>
</dbReference>
<dbReference type="SUPFAM" id="SSF52402">
    <property type="entry name" value="Adenine nucleotide alpha hydrolases-like"/>
    <property type="match status" value="1"/>
</dbReference>
<reference key="1">
    <citation type="journal article" date="1996" name="Science">
        <title>Complete genome sequence of the methanogenic archaeon, Methanococcus jannaschii.</title>
        <authorList>
            <person name="Bult C.J."/>
            <person name="White O."/>
            <person name="Olsen G.J."/>
            <person name="Zhou L."/>
            <person name="Fleischmann R.D."/>
            <person name="Sutton G.G."/>
            <person name="Blake J.A."/>
            <person name="FitzGerald L.M."/>
            <person name="Clayton R.A."/>
            <person name="Gocayne J.D."/>
            <person name="Kerlavage A.R."/>
            <person name="Dougherty B.A."/>
            <person name="Tomb J.-F."/>
            <person name="Adams M.D."/>
            <person name="Reich C.I."/>
            <person name="Overbeek R."/>
            <person name="Kirkness E.F."/>
            <person name="Weinstock K.G."/>
            <person name="Merrick J.M."/>
            <person name="Glodek A."/>
            <person name="Scott J.L."/>
            <person name="Geoghagen N.S.M."/>
            <person name="Weidman J.F."/>
            <person name="Fuhrmann J.L."/>
            <person name="Nguyen D."/>
            <person name="Utterback T.R."/>
            <person name="Kelley J.M."/>
            <person name="Peterson J.D."/>
            <person name="Sadow P.W."/>
            <person name="Hanna M.C."/>
            <person name="Cotton M.D."/>
            <person name="Roberts K.M."/>
            <person name="Hurst M.A."/>
            <person name="Kaine B.P."/>
            <person name="Borodovsky M."/>
            <person name="Klenk H.-P."/>
            <person name="Fraser C.M."/>
            <person name="Smith H.O."/>
            <person name="Woese C.R."/>
            <person name="Venter J.C."/>
        </authorList>
    </citation>
    <scope>NUCLEOTIDE SEQUENCE [LARGE SCALE GENOMIC DNA]</scope>
    <source>
        <strain>ATCC 43067 / DSM 2661 / JAL-1 / JCM 10045 / NBRC 100440</strain>
    </source>
</reference>
<gene>
    <name type="ordered locus">MJ0485</name>
</gene>
<sequence>MVEINLRELKKYANPFFLTIRKDKILVNNKRMARLSRTKMDKIEEEFGIPVIYSKTYEYVSTKVGRFINKHKIIAPRDIVIVGLSGGKDSLLLLHLLEVYRRKYGIKLIAVTVDVNIGGIRPWKEDTEGVKLIKHHCEMLNVPHIILKNDLDVVELSEILTKHSKGMEFSPCFSCSVIKRHLLGKLAKEIAENENIPYEKVKLAYGHNLDDNSDTILANIFKGERLKFMRPLTRFKYNEVDYQSFKIPLEECIIIRPMLPILERDIIKALEECGIEYYKDKDMCPYSRDRGDSVRRRCHEILEKLEEEIPNIREMVVSSALKTVEYYSKNPYGEDNL</sequence>
<keyword id="KW-0004">4Fe-4S</keyword>
<keyword id="KW-0067">ATP-binding</keyword>
<keyword id="KW-0408">Iron</keyword>
<keyword id="KW-0411">Iron-sulfur</keyword>
<keyword id="KW-0479">Metal-binding</keyword>
<keyword id="KW-0547">Nucleotide-binding</keyword>
<keyword id="KW-1185">Reference proteome</keyword>
<keyword id="KW-0808">Transferase</keyword>